<dbReference type="EMBL" id="GQ386814">
    <property type="protein sequence ID" value="ADJ67989.1"/>
    <property type="status" value="ALT_SEQ"/>
    <property type="molecule type" value="mRNA"/>
</dbReference>
<dbReference type="EMBL" id="AP002092">
    <property type="protein sequence ID" value="BAD73027.1"/>
    <property type="status" value="ALT_SEQ"/>
    <property type="molecule type" value="Genomic_DNA"/>
</dbReference>
<dbReference type="EMBL" id="AP002093">
    <property type="protein sequence ID" value="BAD73049.1"/>
    <property type="status" value="ALT_SEQ"/>
    <property type="molecule type" value="Genomic_DNA"/>
</dbReference>
<dbReference type="EMBL" id="AP008207">
    <property type="protein sequence ID" value="BAF04284.1"/>
    <property type="status" value="ALT_SEQ"/>
    <property type="molecule type" value="Genomic_DNA"/>
</dbReference>
<dbReference type="EMBL" id="AP014957">
    <property type="status" value="NOT_ANNOTATED_CDS"/>
    <property type="molecule type" value="Genomic_DNA"/>
</dbReference>
<dbReference type="RefSeq" id="XP_015614092.1">
    <property type="nucleotide sequence ID" value="XM_015758606.1"/>
</dbReference>
<dbReference type="RefSeq" id="XP_015614100.1">
    <property type="nucleotide sequence ID" value="XM_015758614.1"/>
</dbReference>
<dbReference type="SMR" id="Q5QNI1"/>
<dbReference type="FunCoup" id="Q5QNI1">
    <property type="interactions" value="598"/>
</dbReference>
<dbReference type="STRING" id="39947.Q5QNI1"/>
<dbReference type="PaxDb" id="39947-Q5QNI1"/>
<dbReference type="EnsemblPlants" id="Os01t0210700-02">
    <property type="protein sequence ID" value="Os01t0210700-02"/>
    <property type="gene ID" value="Os01g0210700"/>
</dbReference>
<dbReference type="Gramene" id="Os01t0210700-02">
    <property type="protein sequence ID" value="Os01t0210700-02"/>
    <property type="gene ID" value="Os01g0210700"/>
</dbReference>
<dbReference type="KEGG" id="dosa:Os01g0210700"/>
<dbReference type="eggNOG" id="KOG0498">
    <property type="taxonomic scope" value="Eukaryota"/>
</dbReference>
<dbReference type="InParanoid" id="Q5QNI1"/>
<dbReference type="OrthoDB" id="426293at2759"/>
<dbReference type="Proteomes" id="UP000000763">
    <property type="component" value="Chromosome 1"/>
</dbReference>
<dbReference type="Proteomes" id="UP000059680">
    <property type="component" value="Chromosome 1"/>
</dbReference>
<dbReference type="ExpressionAtlas" id="Q5QNI1">
    <property type="expression patterns" value="baseline and differential"/>
</dbReference>
<dbReference type="GO" id="GO:0034702">
    <property type="term" value="C:monoatomic ion channel complex"/>
    <property type="evidence" value="ECO:0007669"/>
    <property type="project" value="UniProtKB-KW"/>
</dbReference>
<dbReference type="GO" id="GO:0005249">
    <property type="term" value="F:voltage-gated potassium channel activity"/>
    <property type="evidence" value="ECO:0007669"/>
    <property type="project" value="InterPro"/>
</dbReference>
<dbReference type="CDD" id="cd00038">
    <property type="entry name" value="CAP_ED"/>
    <property type="match status" value="1"/>
</dbReference>
<dbReference type="FunFam" id="2.60.120.10:FF:000074">
    <property type="entry name" value="Potassium channel KAT2"/>
    <property type="match status" value="1"/>
</dbReference>
<dbReference type="FunFam" id="1.10.287.70:FF:000123">
    <property type="entry name" value="Potassium channel KAT3"/>
    <property type="match status" value="1"/>
</dbReference>
<dbReference type="Gene3D" id="1.10.287.70">
    <property type="match status" value="1"/>
</dbReference>
<dbReference type="Gene3D" id="2.60.120.10">
    <property type="entry name" value="Jelly Rolls"/>
    <property type="match status" value="1"/>
</dbReference>
<dbReference type="InterPro" id="IPR000595">
    <property type="entry name" value="cNMP-bd_dom"/>
</dbReference>
<dbReference type="InterPro" id="IPR018490">
    <property type="entry name" value="cNMP-bd_dom_sf"/>
</dbReference>
<dbReference type="InterPro" id="IPR005821">
    <property type="entry name" value="Ion_trans_dom"/>
</dbReference>
<dbReference type="InterPro" id="IPR003938">
    <property type="entry name" value="K_chnl_volt-dep_EAG/ELK/ERG"/>
</dbReference>
<dbReference type="InterPro" id="IPR045319">
    <property type="entry name" value="KAT/AKT"/>
</dbReference>
<dbReference type="InterPro" id="IPR021789">
    <property type="entry name" value="KHA_dom"/>
</dbReference>
<dbReference type="InterPro" id="IPR014710">
    <property type="entry name" value="RmlC-like_jellyroll"/>
</dbReference>
<dbReference type="PANTHER" id="PTHR45743">
    <property type="entry name" value="POTASSIUM CHANNEL AKT1"/>
    <property type="match status" value="1"/>
</dbReference>
<dbReference type="PANTHER" id="PTHR45743:SF54">
    <property type="entry name" value="POTASSIUM CHANNEL KAT2"/>
    <property type="match status" value="1"/>
</dbReference>
<dbReference type="Pfam" id="PF00027">
    <property type="entry name" value="cNMP_binding"/>
    <property type="match status" value="1"/>
</dbReference>
<dbReference type="Pfam" id="PF00520">
    <property type="entry name" value="Ion_trans"/>
    <property type="match status" value="1"/>
</dbReference>
<dbReference type="Pfam" id="PF11834">
    <property type="entry name" value="KHA"/>
    <property type="match status" value="1"/>
</dbReference>
<dbReference type="PRINTS" id="PR01463">
    <property type="entry name" value="EAGCHANLFMLY"/>
</dbReference>
<dbReference type="SMART" id="SM00100">
    <property type="entry name" value="cNMP"/>
    <property type="match status" value="1"/>
</dbReference>
<dbReference type="SUPFAM" id="SSF51206">
    <property type="entry name" value="cAMP-binding domain-like"/>
    <property type="match status" value="1"/>
</dbReference>
<dbReference type="SUPFAM" id="SSF81324">
    <property type="entry name" value="Voltage-gated potassium channels"/>
    <property type="match status" value="1"/>
</dbReference>
<dbReference type="PROSITE" id="PS50042">
    <property type="entry name" value="CNMP_BINDING_3"/>
    <property type="match status" value="1"/>
</dbReference>
<dbReference type="PROSITE" id="PS51490">
    <property type="entry name" value="KHA"/>
    <property type="match status" value="1"/>
</dbReference>
<accession>Q5QNI1</accession>
<evidence type="ECO:0000250" key="1"/>
<evidence type="ECO:0000255" key="2"/>
<evidence type="ECO:0000255" key="3">
    <source>
        <dbReference type="PROSITE-ProRule" id="PRU00823"/>
    </source>
</evidence>
<evidence type="ECO:0000305" key="4"/>
<feature type="chain" id="PRO_0000410878" description="Potassium channel KAT2">
    <location>
        <begin position="1"/>
        <end position="601"/>
    </location>
</feature>
<feature type="topological domain" description="Cytoplasmic" evidence="2">
    <location>
        <begin position="1"/>
        <end position="42"/>
    </location>
</feature>
<feature type="transmembrane region" description="Helical; Name=Segment S1" evidence="2">
    <location>
        <begin position="43"/>
        <end position="63"/>
    </location>
</feature>
<feature type="topological domain" description="Extracellular" evidence="2">
    <location>
        <begin position="64"/>
        <end position="71"/>
    </location>
</feature>
<feature type="transmembrane region" description="Helical; Name=Segment S2" evidence="2">
    <location>
        <begin position="72"/>
        <end position="92"/>
    </location>
</feature>
<feature type="topological domain" description="Cytoplasmic" evidence="2">
    <location>
        <begin position="93"/>
        <end position="112"/>
    </location>
</feature>
<feature type="transmembrane region" description="Helical; Name=Segment S3" evidence="2">
    <location>
        <begin position="113"/>
        <end position="133"/>
    </location>
</feature>
<feature type="topological domain" description="Extracellular" evidence="2">
    <location>
        <begin position="134"/>
        <end position="144"/>
    </location>
</feature>
<feature type="transmembrane region" description="Helical; Voltage-sensor; Name=Segment S4" evidence="2">
    <location>
        <begin position="145"/>
        <end position="165"/>
    </location>
</feature>
<feature type="topological domain" description="Cytoplasmic" evidence="2">
    <location>
        <begin position="166"/>
        <end position="179"/>
    </location>
</feature>
<feature type="transmembrane region" description="Helical; Name=Segment S5" evidence="2">
    <location>
        <begin position="180"/>
        <end position="200"/>
    </location>
</feature>
<feature type="topological domain" description="Extracellular" evidence="2">
    <location>
        <begin position="201"/>
        <end position="227"/>
    </location>
</feature>
<feature type="intramembrane region" description="Pore-forming; Name=Segment H5" evidence="2">
    <location>
        <begin position="228"/>
        <end position="247"/>
    </location>
</feature>
<feature type="topological domain" description="Extracellular" evidence="2">
    <location>
        <begin position="248"/>
        <end position="251"/>
    </location>
</feature>
<feature type="transmembrane region" description="Helical; Name=Segment S6" evidence="2">
    <location>
        <begin position="252"/>
        <end position="272"/>
    </location>
</feature>
<feature type="topological domain" description="Cytoplasmic" evidence="2">
    <location>
        <begin position="273"/>
        <end position="601"/>
    </location>
</feature>
<feature type="domain" description="KHA" evidence="3">
    <location>
        <begin position="530"/>
        <end position="601"/>
    </location>
</feature>
<feature type="binding site">
    <location>
        <begin position="356"/>
        <end position="475"/>
    </location>
    <ligand>
        <name>a nucleoside 3',5'-cyclic phosphate</name>
        <dbReference type="ChEBI" id="CHEBI:58464"/>
    </ligand>
</feature>
<name>KAT2_ORYSJ</name>
<gene>
    <name type="ordered locus">Os01g0210700</name>
    <name type="ordered locus">LOC_Os01g11250</name>
    <name type="ORF">P0031E09.16</name>
    <name type="ORF">P0466B10.26</name>
</gene>
<protein>
    <recommendedName>
        <fullName>Potassium channel KAT2</fullName>
    </recommendedName>
</protein>
<keyword id="KW-0407">Ion channel</keyword>
<keyword id="KW-0406">Ion transport</keyword>
<keyword id="KW-0472">Membrane</keyword>
<keyword id="KW-0630">Potassium</keyword>
<keyword id="KW-0631">Potassium channel</keyword>
<keyword id="KW-0633">Potassium transport</keyword>
<keyword id="KW-1185">Reference proteome</keyword>
<keyword id="KW-0812">Transmembrane</keyword>
<keyword id="KW-1133">Transmembrane helix</keyword>
<keyword id="KW-0813">Transport</keyword>
<keyword id="KW-0851">Voltage-gated channel</keyword>
<reference key="1">
    <citation type="submission" date="2009-07" db="EMBL/GenBank/DDBJ databases">
        <title>Putative potassium channel mRNA.</title>
        <authorList>
            <person name="Hwang H."/>
            <person name="Jeong M."/>
            <person name="Kim H."/>
            <person name="Lee H."/>
            <person name="Park H."/>
            <person name="Byun M."/>
            <person name="Kim B."/>
        </authorList>
    </citation>
    <scope>NUCLEOTIDE SEQUENCE [MRNA]</scope>
    <source>
        <strain>cv. Dongjin</strain>
    </source>
</reference>
<reference key="2">
    <citation type="journal article" date="2002" name="Nature">
        <title>The genome sequence and structure of rice chromosome 1.</title>
        <authorList>
            <person name="Sasaki T."/>
            <person name="Matsumoto T."/>
            <person name="Yamamoto K."/>
            <person name="Sakata K."/>
            <person name="Baba T."/>
            <person name="Katayose Y."/>
            <person name="Wu J."/>
            <person name="Niimura Y."/>
            <person name="Cheng Z."/>
            <person name="Nagamura Y."/>
            <person name="Antonio B.A."/>
            <person name="Kanamori H."/>
            <person name="Hosokawa S."/>
            <person name="Masukawa M."/>
            <person name="Arikawa K."/>
            <person name="Chiden Y."/>
            <person name="Hayashi M."/>
            <person name="Okamoto M."/>
            <person name="Ando T."/>
            <person name="Aoki H."/>
            <person name="Arita K."/>
            <person name="Hamada M."/>
            <person name="Harada C."/>
            <person name="Hijishita S."/>
            <person name="Honda M."/>
            <person name="Ichikawa Y."/>
            <person name="Idonuma A."/>
            <person name="Iijima M."/>
            <person name="Ikeda M."/>
            <person name="Ikeno M."/>
            <person name="Ito S."/>
            <person name="Ito T."/>
            <person name="Ito Y."/>
            <person name="Ito Y."/>
            <person name="Iwabuchi A."/>
            <person name="Kamiya K."/>
            <person name="Karasawa W."/>
            <person name="Katagiri S."/>
            <person name="Kikuta A."/>
            <person name="Kobayashi N."/>
            <person name="Kono I."/>
            <person name="Machita K."/>
            <person name="Maehara T."/>
            <person name="Mizuno H."/>
            <person name="Mizubayashi T."/>
            <person name="Mukai Y."/>
            <person name="Nagasaki H."/>
            <person name="Nakashima M."/>
            <person name="Nakama Y."/>
            <person name="Nakamichi Y."/>
            <person name="Nakamura M."/>
            <person name="Namiki N."/>
            <person name="Negishi M."/>
            <person name="Ohta I."/>
            <person name="Ono N."/>
            <person name="Saji S."/>
            <person name="Sakai K."/>
            <person name="Shibata M."/>
            <person name="Shimokawa T."/>
            <person name="Shomura A."/>
            <person name="Song J."/>
            <person name="Takazaki Y."/>
            <person name="Terasawa K."/>
            <person name="Tsuji K."/>
            <person name="Waki K."/>
            <person name="Yamagata H."/>
            <person name="Yamane H."/>
            <person name="Yoshiki S."/>
            <person name="Yoshihara R."/>
            <person name="Yukawa K."/>
            <person name="Zhong H."/>
            <person name="Iwama H."/>
            <person name="Endo T."/>
            <person name="Ito H."/>
            <person name="Hahn J.H."/>
            <person name="Kim H.-I."/>
            <person name="Eun M.-Y."/>
            <person name="Yano M."/>
            <person name="Jiang J."/>
            <person name="Gojobori T."/>
        </authorList>
    </citation>
    <scope>NUCLEOTIDE SEQUENCE [LARGE SCALE GENOMIC DNA]</scope>
    <source>
        <strain>cv. Nipponbare</strain>
    </source>
</reference>
<reference key="3">
    <citation type="journal article" date="2005" name="Nature">
        <title>The map-based sequence of the rice genome.</title>
        <authorList>
            <consortium name="International rice genome sequencing project (IRGSP)"/>
        </authorList>
    </citation>
    <scope>NUCLEOTIDE SEQUENCE [LARGE SCALE GENOMIC DNA]</scope>
    <source>
        <strain>cv. Nipponbare</strain>
    </source>
</reference>
<reference key="4">
    <citation type="journal article" date="2008" name="Nucleic Acids Res.">
        <title>The rice annotation project database (RAP-DB): 2008 update.</title>
        <authorList>
            <consortium name="The rice annotation project (RAP)"/>
        </authorList>
    </citation>
    <scope>GENOME REANNOTATION</scope>
    <source>
        <strain>cv. Nipponbare</strain>
    </source>
</reference>
<reference key="5">
    <citation type="journal article" date="2013" name="Rice">
        <title>Improvement of the Oryza sativa Nipponbare reference genome using next generation sequence and optical map data.</title>
        <authorList>
            <person name="Kawahara Y."/>
            <person name="de la Bastide M."/>
            <person name="Hamilton J.P."/>
            <person name="Kanamori H."/>
            <person name="McCombie W.R."/>
            <person name="Ouyang S."/>
            <person name="Schwartz D.C."/>
            <person name="Tanaka T."/>
            <person name="Wu J."/>
            <person name="Zhou S."/>
            <person name="Childs K.L."/>
            <person name="Davidson R.M."/>
            <person name="Lin H."/>
            <person name="Quesada-Ocampo L."/>
            <person name="Vaillancourt B."/>
            <person name="Sakai H."/>
            <person name="Lee S.S."/>
            <person name="Kim J."/>
            <person name="Numa H."/>
            <person name="Itoh T."/>
            <person name="Buell C.R."/>
            <person name="Matsumoto T."/>
        </authorList>
    </citation>
    <scope>GENOME REANNOTATION</scope>
    <source>
        <strain>cv. Nipponbare</strain>
    </source>
</reference>
<comment type="function">
    <text evidence="1">Probable inward-rectifying potassium channel. Assuming opened or closed conformations in response to the voltage difference across the membrane, the channel is activated by hyperpolarization (By similarity).</text>
</comment>
<comment type="subcellular location">
    <subcellularLocation>
        <location evidence="4">Membrane</location>
        <topology evidence="4">Multi-pass membrane protein</topology>
    </subcellularLocation>
</comment>
<comment type="domain">
    <text evidence="1">The segment S4 is probably the voltage-sensor and is characterized by a series of positively charged amino acids. The pore-forming region H5 is enclosed by the transmembrane segments S5 and S6 in the Shaker-type (1P/6TM) and contains the GYGD signature motif which seems to be involved in potassium selectivity (By similarity).</text>
</comment>
<comment type="domain">
    <text evidence="1">The KHA domain (rich in hydrophobic and acidic residues) present in the C-terminal part is likely to be important for tetramerization.</text>
</comment>
<comment type="similarity">
    <text evidence="4">Belongs to the potassium channel family. Plant (TC 1.A.1.4) subfamily.</text>
</comment>
<comment type="sequence caution" evidence="4">
    <conflict type="miscellaneous discrepancy">
        <sequence resource="EMBL-CDS" id="ADJ67989"/>
    </conflict>
    <text>Sequencing errors.</text>
</comment>
<comment type="sequence caution" evidence="4">
    <conflict type="erroneous gene model prediction">
        <sequence resource="EMBL-CDS" id="BAD73027"/>
    </conflict>
</comment>
<comment type="sequence caution" evidence="4">
    <conflict type="erroneous gene model prediction">
        <sequence resource="EMBL-CDS" id="BAD73049"/>
    </conflict>
</comment>
<comment type="sequence caution" evidence="4">
    <conflict type="erroneous gene model prediction">
        <sequence resource="EMBL-CDS" id="BAF04284"/>
    </conflict>
</comment>
<sequence>METISNIFHNDPLPPLGARANQSIKLRKFIISPYDSRYRTWETFLLVLVVYSAWICPFELAYLRNLSWKVSLVDNIIDSFFAIDIILTFFLAYLDQKSYLLVDDPKRIVARYFSSWFLFDVCSTIPYQLLGQIFKKHENGLAYRLLSMLRLWRLRRLSELFARLEKDIRLNYYWIRCTKLISVTLFAVHCSGCFNYLIADRYPNPARTWIGAAIPNYRSQNLWVRYVTAIYWSITTLTTTGYGDLHAENQREMLFSICYMLFNLGLTAYLIGNMTNLVVQGSCRTRNFRDTIHAASQFAARNQLPGHIKDEMLSHICLRYKTEGLKQKETLDSLPKGIRSSIACNLFLPVIEKVYLFHGVSFTCMIQLVTEMEAEYYPPREVVILQNEAPRDVYILVSGAVEERVEIDGTEKVQEVLCNGEIFGEIGVICSIPQPCAFHTIKVSQLLRLNTAVLKNIIKENSDDRRVILNNLSQKMNQDHRFSTEVMEKSLQMMHQHFGEYNRCSALNQDNEKNELKANNGHSMALEWKRVTIHMYSQRNKRPEAPLAKVINLPGSLDKLFAIACQKFNNYRLTKLVNPEFAEIDDITVIRDGDHLFFMEI</sequence>
<organism>
    <name type="scientific">Oryza sativa subsp. japonica</name>
    <name type="common">Rice</name>
    <dbReference type="NCBI Taxonomy" id="39947"/>
    <lineage>
        <taxon>Eukaryota</taxon>
        <taxon>Viridiplantae</taxon>
        <taxon>Streptophyta</taxon>
        <taxon>Embryophyta</taxon>
        <taxon>Tracheophyta</taxon>
        <taxon>Spermatophyta</taxon>
        <taxon>Magnoliopsida</taxon>
        <taxon>Liliopsida</taxon>
        <taxon>Poales</taxon>
        <taxon>Poaceae</taxon>
        <taxon>BOP clade</taxon>
        <taxon>Oryzoideae</taxon>
        <taxon>Oryzeae</taxon>
        <taxon>Oryzinae</taxon>
        <taxon>Oryza</taxon>
        <taxon>Oryza sativa</taxon>
    </lineage>
</organism>
<proteinExistence type="evidence at transcript level"/>